<organism>
    <name type="scientific">Kocuria rhizophila (strain ATCC 9341 / DSM 348 / NBRC 103217 / DC2201)</name>
    <dbReference type="NCBI Taxonomy" id="378753"/>
    <lineage>
        <taxon>Bacteria</taxon>
        <taxon>Bacillati</taxon>
        <taxon>Actinomycetota</taxon>
        <taxon>Actinomycetes</taxon>
        <taxon>Micrococcales</taxon>
        <taxon>Micrococcaceae</taxon>
        <taxon>Kocuria</taxon>
    </lineage>
</organism>
<comment type="subunit">
    <text evidence="1">Homohexamer. Assembles into a hexameric ring structure.</text>
</comment>
<comment type="similarity">
    <text evidence="1">Belongs to the AAA ATPase family.</text>
</comment>
<sequence>MTEPRHESGSAAPQRPATDPVQRQVNLLRDQKRNLDKQAAALASQNEKLVRLLNASRQEIVGLKKTLAAEAEPPATYAVVLQVNHGRRPVGEATGDGPVVTGPTLDVLAAGRRMRVAVSPLVSFGACEPGLGVLLNENYVVVALLEYERTGEVATVKEVVDHDRVLTVGRSDEERVLLLSGRLRRERPKPGDAVTVDHRTGFALEPVTRTDVEQLVLEEVPDVSYTDIGGLGPQIEAIRDAVELPHVHPEIFREHGLRPPKGILLYGPPGNGKTLIAKAVARSLAERSAAKAGRSRPEGYFLNIKGPELLDKYVGETERQIRSIFANAREQAARGVPVVVFFDEMDSLFRVRGSGLSSDVETTIVPQLLTEIDGVEQLDNVMVVGATNREDMIDPAVLRPGRLDVKIRIDRPDREGAREIFSLYLTPDLPLRDEDVARAGSRALAAEELVAAAVQRMYAREPETEFLTIGYRNGTSETLYFSDYASGAVIRNVVDRAKKQAIKTLLTTGRRGITAEHLVAAVDEEFHEQQDLPDTEDSEDWARLTGRRGDTIDSVHMASHRPQGEPGPGATP</sequence>
<protein>
    <recommendedName>
        <fullName evidence="1">AAA ATPase forming ring-shaped complexes</fullName>
        <shortName evidence="1">ARC</shortName>
    </recommendedName>
</protein>
<name>ARC_KOCRD</name>
<accession>B2GIP2</accession>
<keyword id="KW-0067">ATP-binding</keyword>
<keyword id="KW-0175">Coiled coil</keyword>
<keyword id="KW-0547">Nucleotide-binding</keyword>
<keyword id="KW-1185">Reference proteome</keyword>
<gene>
    <name evidence="1" type="primary">arc</name>
    <name type="ordered locus">KRH_13880</name>
</gene>
<dbReference type="EMBL" id="AP009152">
    <property type="protein sequence ID" value="BAG29735.1"/>
    <property type="molecule type" value="Genomic_DNA"/>
</dbReference>
<dbReference type="RefSeq" id="WP_012398456.1">
    <property type="nucleotide sequence ID" value="NC_010617.1"/>
</dbReference>
<dbReference type="SMR" id="B2GIP2"/>
<dbReference type="STRING" id="378753.KRH_13880"/>
<dbReference type="KEGG" id="krh:KRH_13880"/>
<dbReference type="eggNOG" id="COG1222">
    <property type="taxonomic scope" value="Bacteria"/>
</dbReference>
<dbReference type="HOGENOM" id="CLU_036054_0_0_11"/>
<dbReference type="OrthoDB" id="9809379at2"/>
<dbReference type="Proteomes" id="UP000008838">
    <property type="component" value="Chromosome"/>
</dbReference>
<dbReference type="GO" id="GO:0000502">
    <property type="term" value="C:proteasome complex"/>
    <property type="evidence" value="ECO:0007669"/>
    <property type="project" value="InterPro"/>
</dbReference>
<dbReference type="GO" id="GO:0005524">
    <property type="term" value="F:ATP binding"/>
    <property type="evidence" value="ECO:0007669"/>
    <property type="project" value="UniProtKB-UniRule"/>
</dbReference>
<dbReference type="GO" id="GO:0016887">
    <property type="term" value="F:ATP hydrolysis activity"/>
    <property type="evidence" value="ECO:0007669"/>
    <property type="project" value="UniProtKB-UniRule"/>
</dbReference>
<dbReference type="GO" id="GO:0019941">
    <property type="term" value="P:modification-dependent protein catabolic process"/>
    <property type="evidence" value="ECO:0007669"/>
    <property type="project" value="InterPro"/>
</dbReference>
<dbReference type="GO" id="GO:0010498">
    <property type="term" value="P:proteasomal protein catabolic process"/>
    <property type="evidence" value="ECO:0007669"/>
    <property type="project" value="InterPro"/>
</dbReference>
<dbReference type="FunFam" id="3.40.50.300:FF:001025">
    <property type="entry name" value="ATPase family, AAA domain-containing 2B"/>
    <property type="match status" value="1"/>
</dbReference>
<dbReference type="Gene3D" id="1.10.8.60">
    <property type="match status" value="1"/>
</dbReference>
<dbReference type="Gene3D" id="1.20.5.170">
    <property type="match status" value="1"/>
</dbReference>
<dbReference type="Gene3D" id="2.40.50.140">
    <property type="entry name" value="Nucleic acid-binding proteins"/>
    <property type="match status" value="2"/>
</dbReference>
<dbReference type="Gene3D" id="3.40.50.300">
    <property type="entry name" value="P-loop containing nucleotide triphosphate hydrolases"/>
    <property type="match status" value="1"/>
</dbReference>
<dbReference type="HAMAP" id="MF_02112">
    <property type="entry name" value="ARC_ATPase"/>
    <property type="match status" value="1"/>
</dbReference>
<dbReference type="InterPro" id="IPR003593">
    <property type="entry name" value="AAA+_ATPase"/>
</dbReference>
<dbReference type="InterPro" id="IPR050168">
    <property type="entry name" value="AAA_ATPase_domain"/>
</dbReference>
<dbReference type="InterPro" id="IPR003959">
    <property type="entry name" value="ATPase_AAA_core"/>
</dbReference>
<dbReference type="InterPro" id="IPR003960">
    <property type="entry name" value="ATPase_AAA_CS"/>
</dbReference>
<dbReference type="InterPro" id="IPR012340">
    <property type="entry name" value="NA-bd_OB-fold"/>
</dbReference>
<dbReference type="InterPro" id="IPR027417">
    <property type="entry name" value="P-loop_NTPase"/>
</dbReference>
<dbReference type="InterPro" id="IPR032501">
    <property type="entry name" value="Prot_ATP_ID_OB_2nd"/>
</dbReference>
<dbReference type="InterPro" id="IPR041626">
    <property type="entry name" value="Prot_ATP_ID_OB_N"/>
</dbReference>
<dbReference type="InterPro" id="IPR022482">
    <property type="entry name" value="Proteasome_ATPase"/>
</dbReference>
<dbReference type="NCBIfam" id="TIGR03689">
    <property type="entry name" value="pup_AAA"/>
    <property type="match status" value="1"/>
</dbReference>
<dbReference type="PANTHER" id="PTHR23077">
    <property type="entry name" value="AAA-FAMILY ATPASE"/>
    <property type="match status" value="1"/>
</dbReference>
<dbReference type="PANTHER" id="PTHR23077:SF144">
    <property type="entry name" value="PROTEASOME-ASSOCIATED ATPASE"/>
    <property type="match status" value="1"/>
</dbReference>
<dbReference type="Pfam" id="PF00004">
    <property type="entry name" value="AAA"/>
    <property type="match status" value="1"/>
</dbReference>
<dbReference type="Pfam" id="PF16450">
    <property type="entry name" value="Prot_ATP_ID_OB_C"/>
    <property type="match status" value="1"/>
</dbReference>
<dbReference type="Pfam" id="PF17758">
    <property type="entry name" value="Prot_ATP_ID_OB_N"/>
    <property type="match status" value="1"/>
</dbReference>
<dbReference type="SMART" id="SM00382">
    <property type="entry name" value="AAA"/>
    <property type="match status" value="1"/>
</dbReference>
<dbReference type="SUPFAM" id="SSF52540">
    <property type="entry name" value="P-loop containing nucleoside triphosphate hydrolases"/>
    <property type="match status" value="1"/>
</dbReference>
<dbReference type="PROSITE" id="PS00674">
    <property type="entry name" value="AAA"/>
    <property type="match status" value="1"/>
</dbReference>
<feature type="chain" id="PRO_0000396989" description="AAA ATPase forming ring-shaped complexes">
    <location>
        <begin position="1"/>
        <end position="572"/>
    </location>
</feature>
<feature type="region of interest" description="Disordered" evidence="2">
    <location>
        <begin position="1"/>
        <end position="22"/>
    </location>
</feature>
<feature type="region of interest" description="Disordered" evidence="2">
    <location>
        <begin position="527"/>
        <end position="572"/>
    </location>
</feature>
<feature type="coiled-coil region" evidence="1">
    <location>
        <begin position="21"/>
        <end position="67"/>
    </location>
</feature>
<feature type="compositionally biased region" description="Acidic residues" evidence="2">
    <location>
        <begin position="527"/>
        <end position="539"/>
    </location>
</feature>
<feature type="binding site" evidence="1">
    <location>
        <begin position="270"/>
        <end position="275"/>
    </location>
    <ligand>
        <name>ATP</name>
        <dbReference type="ChEBI" id="CHEBI:30616"/>
    </ligand>
</feature>
<evidence type="ECO:0000255" key="1">
    <source>
        <dbReference type="HAMAP-Rule" id="MF_02112"/>
    </source>
</evidence>
<evidence type="ECO:0000256" key="2">
    <source>
        <dbReference type="SAM" id="MobiDB-lite"/>
    </source>
</evidence>
<proteinExistence type="inferred from homology"/>
<reference key="1">
    <citation type="journal article" date="2008" name="J. Bacteriol.">
        <title>Complete genome sequence of the soil actinomycete Kocuria rhizophila.</title>
        <authorList>
            <person name="Takarada H."/>
            <person name="Sekine M."/>
            <person name="Kosugi H."/>
            <person name="Matsuo Y."/>
            <person name="Fujisawa T."/>
            <person name="Omata S."/>
            <person name="Kishi E."/>
            <person name="Shimizu A."/>
            <person name="Tsukatani N."/>
            <person name="Tanikawa S."/>
            <person name="Fujita N."/>
            <person name="Harayama S."/>
        </authorList>
    </citation>
    <scope>NUCLEOTIDE SEQUENCE [LARGE SCALE GENOMIC DNA]</scope>
    <source>
        <strain>ATCC 9341 / DSM 348 / NBRC 103217 / DC2201</strain>
    </source>
</reference>